<sequence length="513" mass="60586">MDEFHRCGKEDSFWQQCFLYPLFFQEDLYAISHDHYLDVSSSSRPMEHLSSNDQLSFLTVKRLIGQIRQQNHSIVLFVNCDPNPLADRKKSFYSESVLEALTLVLEVPFSIWSKSSVEGMNECKSFRSIHSIFPFLEDKFPHSNSILDARIPYSIHPEILVRTFRRWIRDAPSLHPLRSVLYDYRNSPENLQRSIIVVPRVNTRFFLFLLNYYVCECESILFSRLKRSSHSRSLSHGSFPQRTHFHRKIKHIIIFSRRNSLKSIWSLKDPKIHYVRYGERPIIAIKGDDLLVKKCRYYLLIFRQFYFHLWSEPYRVCSHQLSKNCSSSPGYFLRVRMNPLLVPTKTLDDFFIPILITNEMDPIVPIVPIIGLLATEKFCDISGRPISKLSWTSLTDDDILDRFDQIWRNLFHYYSGSFDRDGLYRIKYILLLSCAKTLACKHKSTIRVVRKELGPELFKKSFSKEREFDSLPFSSKAASQRERIWHSDIPQINPLANSWQKIQDLKIENLFDQ</sequence>
<gene>
    <name evidence="1" type="primary">matK</name>
</gene>
<feature type="chain" id="PRO_0000143628" description="Maturase K">
    <location>
        <begin position="1"/>
        <end position="513"/>
    </location>
</feature>
<dbReference type="EMBL" id="AB080945">
    <property type="protein sequence ID" value="BAC11948.1"/>
    <property type="molecule type" value="Genomic_DNA"/>
</dbReference>
<dbReference type="GO" id="GO:0009507">
    <property type="term" value="C:chloroplast"/>
    <property type="evidence" value="ECO:0007669"/>
    <property type="project" value="UniProtKB-SubCell"/>
</dbReference>
<dbReference type="GO" id="GO:0003723">
    <property type="term" value="F:RNA binding"/>
    <property type="evidence" value="ECO:0007669"/>
    <property type="project" value="UniProtKB-KW"/>
</dbReference>
<dbReference type="GO" id="GO:0006397">
    <property type="term" value="P:mRNA processing"/>
    <property type="evidence" value="ECO:0007669"/>
    <property type="project" value="UniProtKB-KW"/>
</dbReference>
<dbReference type="GO" id="GO:0008380">
    <property type="term" value="P:RNA splicing"/>
    <property type="evidence" value="ECO:0007669"/>
    <property type="project" value="UniProtKB-UniRule"/>
</dbReference>
<dbReference type="GO" id="GO:0008033">
    <property type="term" value="P:tRNA processing"/>
    <property type="evidence" value="ECO:0007669"/>
    <property type="project" value="UniProtKB-KW"/>
</dbReference>
<dbReference type="HAMAP" id="MF_01390">
    <property type="entry name" value="MatK"/>
    <property type="match status" value="1"/>
</dbReference>
<dbReference type="InterPro" id="IPR024937">
    <property type="entry name" value="Domain_X"/>
</dbReference>
<dbReference type="InterPro" id="IPR002866">
    <property type="entry name" value="Maturase_MatK"/>
</dbReference>
<dbReference type="InterPro" id="IPR024942">
    <property type="entry name" value="Maturase_MatK_N"/>
</dbReference>
<dbReference type="PANTHER" id="PTHR34811">
    <property type="entry name" value="MATURASE K"/>
    <property type="match status" value="1"/>
</dbReference>
<dbReference type="PANTHER" id="PTHR34811:SF1">
    <property type="entry name" value="MATURASE K"/>
    <property type="match status" value="1"/>
</dbReference>
<dbReference type="Pfam" id="PF01348">
    <property type="entry name" value="Intron_maturas2"/>
    <property type="match status" value="1"/>
</dbReference>
<dbReference type="Pfam" id="PF01824">
    <property type="entry name" value="MatK_N"/>
    <property type="match status" value="1"/>
</dbReference>
<organism>
    <name type="scientific">Pinus resinosa</name>
    <name type="common">Red pine</name>
    <name type="synonym">Norway pine</name>
    <dbReference type="NCBI Taxonomy" id="54921"/>
    <lineage>
        <taxon>Eukaryota</taxon>
        <taxon>Viridiplantae</taxon>
        <taxon>Streptophyta</taxon>
        <taxon>Embryophyta</taxon>
        <taxon>Tracheophyta</taxon>
        <taxon>Spermatophyta</taxon>
        <taxon>Pinopsida</taxon>
        <taxon>Pinidae</taxon>
        <taxon>Conifers I</taxon>
        <taxon>Pinales</taxon>
        <taxon>Pinaceae</taxon>
        <taxon>Pinus</taxon>
        <taxon>Pinus subgen. Pinus</taxon>
    </lineage>
</organism>
<comment type="function">
    <text evidence="1">Usually encoded in the trnK tRNA gene intron. Probably assists in splicing its own and other chloroplast group II introns.</text>
</comment>
<comment type="subcellular location">
    <subcellularLocation>
        <location>Plastid</location>
        <location>Chloroplast</location>
    </subcellularLocation>
</comment>
<comment type="similarity">
    <text evidence="1">Belongs to the intron maturase 2 family. MatK subfamily.</text>
</comment>
<protein>
    <recommendedName>
        <fullName evidence="1">Maturase K</fullName>
    </recommendedName>
    <alternativeName>
        <fullName evidence="1">Intron maturase</fullName>
    </alternativeName>
</protein>
<keyword id="KW-0150">Chloroplast</keyword>
<keyword id="KW-0507">mRNA processing</keyword>
<keyword id="KW-0934">Plastid</keyword>
<keyword id="KW-0694">RNA-binding</keyword>
<keyword id="KW-0819">tRNA processing</keyword>
<evidence type="ECO:0000255" key="1">
    <source>
        <dbReference type="HAMAP-Rule" id="MF_01390"/>
    </source>
</evidence>
<geneLocation type="chloroplast"/>
<accession>Q8HQS2</accession>
<proteinExistence type="inferred from homology"/>
<name>MATK_PINRE</name>
<reference key="1">
    <citation type="submission" date="2002-03" db="EMBL/GenBank/DDBJ databases">
        <title>Phylogeny of the North American pines.</title>
        <authorList>
            <person name="Geada-Lopez G."/>
            <person name="Kamiya K."/>
            <person name="Harada K."/>
        </authorList>
    </citation>
    <scope>NUCLEOTIDE SEQUENCE [GENOMIC DNA]</scope>
    <source>
        <tissue>Leaf</tissue>
    </source>
</reference>